<sequence>MARVTVQDAVEKIGNRFDLVLVAARRARQMQVGGKDPLVPEENDKTTVIALREIEEGLINNQILDVRERQEQQEQEAAELQAVTAIAEGRR</sequence>
<proteinExistence type="inferred from homology"/>
<feature type="chain" id="PRO_0000237503" description="DNA-directed RNA polymerase subunit omega">
    <location>
        <begin position="1"/>
        <end position="91"/>
    </location>
</feature>
<organism>
    <name type="scientific">Salmonella paratyphi A (strain ATCC 9150 / SARB42)</name>
    <dbReference type="NCBI Taxonomy" id="295319"/>
    <lineage>
        <taxon>Bacteria</taxon>
        <taxon>Pseudomonadati</taxon>
        <taxon>Pseudomonadota</taxon>
        <taxon>Gammaproteobacteria</taxon>
        <taxon>Enterobacterales</taxon>
        <taxon>Enterobacteriaceae</taxon>
        <taxon>Salmonella</taxon>
    </lineage>
</organism>
<protein>
    <recommendedName>
        <fullName evidence="1">DNA-directed RNA polymerase subunit omega</fullName>
        <shortName evidence="1">RNAP omega subunit</shortName>
        <ecNumber evidence="1">2.7.7.6</ecNumber>
    </recommendedName>
    <alternativeName>
        <fullName evidence="1">RNA polymerase omega subunit</fullName>
    </alternativeName>
    <alternativeName>
        <fullName evidence="1">Transcriptase subunit omega</fullName>
    </alternativeName>
</protein>
<keyword id="KW-0240">DNA-directed RNA polymerase</keyword>
<keyword id="KW-0548">Nucleotidyltransferase</keyword>
<keyword id="KW-0804">Transcription</keyword>
<keyword id="KW-0808">Transferase</keyword>
<reference key="1">
    <citation type="journal article" date="2004" name="Nat. Genet.">
        <title>Comparison of genome degradation in Paratyphi A and Typhi, human-restricted serovars of Salmonella enterica that cause typhoid.</title>
        <authorList>
            <person name="McClelland M."/>
            <person name="Sanderson K.E."/>
            <person name="Clifton S.W."/>
            <person name="Latreille P."/>
            <person name="Porwollik S."/>
            <person name="Sabo A."/>
            <person name="Meyer R."/>
            <person name="Bieri T."/>
            <person name="Ozersky P."/>
            <person name="McLellan M."/>
            <person name="Harkins C.R."/>
            <person name="Wang C."/>
            <person name="Nguyen C."/>
            <person name="Berghoff A."/>
            <person name="Elliott G."/>
            <person name="Kohlberg S."/>
            <person name="Strong C."/>
            <person name="Du F."/>
            <person name="Carter J."/>
            <person name="Kremizki C."/>
            <person name="Layman D."/>
            <person name="Leonard S."/>
            <person name="Sun H."/>
            <person name="Fulton L."/>
            <person name="Nash W."/>
            <person name="Miner T."/>
            <person name="Minx P."/>
            <person name="Delehaunty K."/>
            <person name="Fronick C."/>
            <person name="Magrini V."/>
            <person name="Nhan M."/>
            <person name="Warren W."/>
            <person name="Florea L."/>
            <person name="Spieth J."/>
            <person name="Wilson R.K."/>
        </authorList>
    </citation>
    <scope>NUCLEOTIDE SEQUENCE [LARGE SCALE GENOMIC DNA]</scope>
    <source>
        <strain>ATCC 9150 / SARB42</strain>
    </source>
</reference>
<name>RPOZ_SALPA</name>
<dbReference type="EC" id="2.7.7.6" evidence="1"/>
<dbReference type="EMBL" id="CP000026">
    <property type="protein sequence ID" value="AAV79394.1"/>
    <property type="molecule type" value="Genomic_DNA"/>
</dbReference>
<dbReference type="RefSeq" id="WP_000135058.1">
    <property type="nucleotide sequence ID" value="NC_006511.1"/>
</dbReference>
<dbReference type="SMR" id="Q5PC39"/>
<dbReference type="GeneID" id="98390719"/>
<dbReference type="KEGG" id="spt:SPA3593"/>
<dbReference type="HOGENOM" id="CLU_125406_5_3_6"/>
<dbReference type="Proteomes" id="UP000008185">
    <property type="component" value="Chromosome"/>
</dbReference>
<dbReference type="GO" id="GO:0000428">
    <property type="term" value="C:DNA-directed RNA polymerase complex"/>
    <property type="evidence" value="ECO:0007669"/>
    <property type="project" value="UniProtKB-KW"/>
</dbReference>
<dbReference type="GO" id="GO:0003677">
    <property type="term" value="F:DNA binding"/>
    <property type="evidence" value="ECO:0007669"/>
    <property type="project" value="UniProtKB-UniRule"/>
</dbReference>
<dbReference type="GO" id="GO:0003899">
    <property type="term" value="F:DNA-directed RNA polymerase activity"/>
    <property type="evidence" value="ECO:0007669"/>
    <property type="project" value="UniProtKB-UniRule"/>
</dbReference>
<dbReference type="GO" id="GO:0006351">
    <property type="term" value="P:DNA-templated transcription"/>
    <property type="evidence" value="ECO:0007669"/>
    <property type="project" value="UniProtKB-UniRule"/>
</dbReference>
<dbReference type="FunFam" id="3.90.940.10:FF:000001">
    <property type="entry name" value="DNA-directed RNA polymerase subunit omega"/>
    <property type="match status" value="1"/>
</dbReference>
<dbReference type="Gene3D" id="3.90.940.10">
    <property type="match status" value="1"/>
</dbReference>
<dbReference type="HAMAP" id="MF_00366">
    <property type="entry name" value="RNApol_bact_RpoZ"/>
    <property type="match status" value="1"/>
</dbReference>
<dbReference type="InterPro" id="IPR003716">
    <property type="entry name" value="DNA-dir_RNA_pol_omega"/>
</dbReference>
<dbReference type="InterPro" id="IPR006110">
    <property type="entry name" value="Pol_omega/Rpo6/RPB6"/>
</dbReference>
<dbReference type="InterPro" id="IPR036161">
    <property type="entry name" value="RPB6/omega-like_sf"/>
</dbReference>
<dbReference type="NCBIfam" id="TIGR00690">
    <property type="entry name" value="rpoZ"/>
    <property type="match status" value="1"/>
</dbReference>
<dbReference type="PANTHER" id="PTHR34476">
    <property type="entry name" value="DNA-DIRECTED RNA POLYMERASE SUBUNIT OMEGA"/>
    <property type="match status" value="1"/>
</dbReference>
<dbReference type="PANTHER" id="PTHR34476:SF1">
    <property type="entry name" value="DNA-DIRECTED RNA POLYMERASE SUBUNIT OMEGA"/>
    <property type="match status" value="1"/>
</dbReference>
<dbReference type="Pfam" id="PF01192">
    <property type="entry name" value="RNA_pol_Rpb6"/>
    <property type="match status" value="1"/>
</dbReference>
<dbReference type="SMART" id="SM01409">
    <property type="entry name" value="RNA_pol_Rpb6"/>
    <property type="match status" value="1"/>
</dbReference>
<dbReference type="SUPFAM" id="SSF63562">
    <property type="entry name" value="RPB6/omega subunit-like"/>
    <property type="match status" value="1"/>
</dbReference>
<evidence type="ECO:0000255" key="1">
    <source>
        <dbReference type="HAMAP-Rule" id="MF_00366"/>
    </source>
</evidence>
<comment type="function">
    <text evidence="1">Promotes RNA polymerase assembly. Latches the N- and C-terminal regions of the beta' subunit thereby facilitating its interaction with the beta and alpha subunits.</text>
</comment>
<comment type="catalytic activity">
    <reaction evidence="1">
        <text>RNA(n) + a ribonucleoside 5'-triphosphate = RNA(n+1) + diphosphate</text>
        <dbReference type="Rhea" id="RHEA:21248"/>
        <dbReference type="Rhea" id="RHEA-COMP:14527"/>
        <dbReference type="Rhea" id="RHEA-COMP:17342"/>
        <dbReference type="ChEBI" id="CHEBI:33019"/>
        <dbReference type="ChEBI" id="CHEBI:61557"/>
        <dbReference type="ChEBI" id="CHEBI:140395"/>
        <dbReference type="EC" id="2.7.7.6"/>
    </reaction>
</comment>
<comment type="subunit">
    <text evidence="1">The RNAP catalytic core consists of 2 alpha, 1 beta, 1 beta' and 1 omega subunit. When a sigma factor is associated with the core the holoenzyme is formed, which can initiate transcription.</text>
</comment>
<comment type="similarity">
    <text evidence="1">Belongs to the RNA polymerase subunit omega family.</text>
</comment>
<gene>
    <name evidence="1" type="primary">rpoZ</name>
    <name type="ordered locus">SPA3593</name>
</gene>
<accession>Q5PC39</accession>